<name>SECM_SHIFL</name>
<proteinExistence type="inferred from homology"/>
<organism>
    <name type="scientific">Shigella flexneri</name>
    <dbReference type="NCBI Taxonomy" id="623"/>
    <lineage>
        <taxon>Bacteria</taxon>
        <taxon>Pseudomonadati</taxon>
        <taxon>Pseudomonadota</taxon>
        <taxon>Gammaproteobacteria</taxon>
        <taxon>Enterobacterales</taxon>
        <taxon>Enterobacteriaceae</taxon>
        <taxon>Shigella</taxon>
    </lineage>
</organism>
<evidence type="ECO:0000255" key="1">
    <source>
        <dbReference type="HAMAP-Rule" id="MF_01332"/>
    </source>
</evidence>
<evidence type="ECO:0000305" key="2"/>
<accession>P62398</accession>
<accession>P10409</accession>
<accession>P75641</accession>
<reference key="1">
    <citation type="journal article" date="2002" name="Nucleic Acids Res.">
        <title>Genome sequence of Shigella flexneri 2a: insights into pathogenicity through comparison with genomes of Escherichia coli K12 and O157.</title>
        <authorList>
            <person name="Jin Q."/>
            <person name="Yuan Z."/>
            <person name="Xu J."/>
            <person name="Wang Y."/>
            <person name="Shen Y."/>
            <person name="Lu W."/>
            <person name="Wang J."/>
            <person name="Liu H."/>
            <person name="Yang J."/>
            <person name="Yang F."/>
            <person name="Zhang X."/>
            <person name="Zhang J."/>
            <person name="Yang G."/>
            <person name="Wu H."/>
            <person name="Qu D."/>
            <person name="Dong J."/>
            <person name="Sun L."/>
            <person name="Xue Y."/>
            <person name="Zhao A."/>
            <person name="Gao Y."/>
            <person name="Zhu J."/>
            <person name="Kan B."/>
            <person name="Ding K."/>
            <person name="Chen S."/>
            <person name="Cheng H."/>
            <person name="Yao Z."/>
            <person name="He B."/>
            <person name="Chen R."/>
            <person name="Ma D."/>
            <person name="Qiang B."/>
            <person name="Wen Y."/>
            <person name="Hou Y."/>
            <person name="Yu J."/>
        </authorList>
    </citation>
    <scope>NUCLEOTIDE SEQUENCE [LARGE SCALE GENOMIC DNA]</scope>
    <source>
        <strain>301 / Serotype 2a</strain>
    </source>
</reference>
<reference key="2">
    <citation type="journal article" date="2003" name="Infect. Immun.">
        <title>Complete genome sequence and comparative genomics of Shigella flexneri serotype 2a strain 2457T.</title>
        <authorList>
            <person name="Wei J."/>
            <person name="Goldberg M.B."/>
            <person name="Burland V."/>
            <person name="Venkatesan M.M."/>
            <person name="Deng W."/>
            <person name="Fournier G."/>
            <person name="Mayhew G.F."/>
            <person name="Plunkett G. III"/>
            <person name="Rose D.J."/>
            <person name="Darling A."/>
            <person name="Mau B."/>
            <person name="Perna N.T."/>
            <person name="Payne S.M."/>
            <person name="Runyen-Janecky L.J."/>
            <person name="Zhou S."/>
            <person name="Schwartz D.C."/>
            <person name="Blattner F.R."/>
        </authorList>
    </citation>
    <scope>NUCLEOTIDE SEQUENCE [LARGE SCALE GENOMIC DNA]</scope>
    <source>
        <strain>ATCC 700930 / 2457T / Serotype 2a</strain>
    </source>
</reference>
<protein>
    <recommendedName>
        <fullName evidence="1">Secretion monitor</fullName>
    </recommendedName>
</protein>
<gene>
    <name evidence="1" type="primary">secM</name>
    <name type="ordered locus">SF0094</name>
    <name type="ordered locus">S0096</name>
</gene>
<dbReference type="EMBL" id="AE005674">
    <property type="protein sequence ID" value="AAN41759.2"/>
    <property type="status" value="ALT_INIT"/>
    <property type="molecule type" value="Genomic_DNA"/>
</dbReference>
<dbReference type="EMBL" id="AE014073">
    <property type="protein sequence ID" value="AAP15640.1"/>
    <property type="status" value="ALT_INIT"/>
    <property type="molecule type" value="Genomic_DNA"/>
</dbReference>
<dbReference type="RefSeq" id="WP_000014321.1">
    <property type="nucleotide sequence ID" value="NZ_WPGW01000007.1"/>
</dbReference>
<dbReference type="SMR" id="P62398"/>
<dbReference type="STRING" id="198214.SF0094"/>
<dbReference type="PaxDb" id="198214-SF0094"/>
<dbReference type="GeneID" id="93777337"/>
<dbReference type="KEGG" id="sfl:SF0094"/>
<dbReference type="KEGG" id="sfx:S0096"/>
<dbReference type="PATRIC" id="fig|198214.7.peg.109"/>
<dbReference type="HOGENOM" id="CLU_108853_0_0_6"/>
<dbReference type="Proteomes" id="UP000001006">
    <property type="component" value="Chromosome"/>
</dbReference>
<dbReference type="Proteomes" id="UP000002673">
    <property type="component" value="Chromosome"/>
</dbReference>
<dbReference type="GO" id="GO:0005829">
    <property type="term" value="C:cytosol"/>
    <property type="evidence" value="ECO:0007669"/>
    <property type="project" value="UniProtKB-SubCell"/>
</dbReference>
<dbReference type="GO" id="GO:0042597">
    <property type="term" value="C:periplasmic space"/>
    <property type="evidence" value="ECO:0007669"/>
    <property type="project" value="UniProtKB-SubCell"/>
</dbReference>
<dbReference type="GO" id="GO:0045182">
    <property type="term" value="F:translation regulator activity"/>
    <property type="evidence" value="ECO:0007669"/>
    <property type="project" value="InterPro"/>
</dbReference>
<dbReference type="HAMAP" id="MF_01332">
    <property type="entry name" value="SecM"/>
    <property type="match status" value="1"/>
</dbReference>
<dbReference type="InterPro" id="IPR009502">
    <property type="entry name" value="SecM"/>
</dbReference>
<dbReference type="NCBIfam" id="NF002799">
    <property type="entry name" value="PRK02943.1-1"/>
    <property type="match status" value="1"/>
</dbReference>
<dbReference type="Pfam" id="PF06558">
    <property type="entry name" value="SecM"/>
    <property type="match status" value="1"/>
</dbReference>
<dbReference type="PIRSF" id="PIRSF004572">
    <property type="entry name" value="SecM"/>
    <property type="match status" value="1"/>
</dbReference>
<keyword id="KW-0963">Cytoplasm</keyword>
<keyword id="KW-0574">Periplasm</keyword>
<keyword id="KW-1185">Reference proteome</keyword>
<keyword id="KW-0732">Signal</keyword>
<sequence>MSGILTRWRQFGKRYFWPHLLLGMVAASLGLPALSNAAEPNAPAKATTRNHEPSAKVNFGQLALLEANTRRPNSNYSVDYWHQHAIRTVIRHLSFAMAPQTLPVAEESLPLQAQHLALLDTLSALLTQEGTPSEKGYRIDYAHFTPQAKFSTPVWISQAQGIRAGPQRLT</sequence>
<comment type="function">
    <text evidence="1">Regulates secA expression by translational coupling of the secM secA operon. Translational pausing at a specific Pro residue 5 residues before the end of the protein may allow disruption of a mRNA repressor helix that normally suppresses secA translation initiation.</text>
</comment>
<comment type="subcellular location">
    <subcellularLocation>
        <location evidence="1">Cytoplasm</location>
        <location evidence="1">Cytosol</location>
    </subcellularLocation>
    <subcellularLocation>
        <location evidence="1">Periplasm</location>
    </subcellularLocation>
    <text evidence="1">The active form is cytosolic, while the periplasmic form is rapidly degraded, mainly by the tail-specific protease.</text>
</comment>
<comment type="similarity">
    <text evidence="1">Belongs to the SecM family.</text>
</comment>
<comment type="sequence caution" evidence="2">
    <conflict type="erroneous initiation">
        <sequence resource="EMBL-CDS" id="AAN41759"/>
    </conflict>
    <text>Extended N-terminus.</text>
</comment>
<comment type="sequence caution" evidence="2">
    <conflict type="erroneous initiation">
        <sequence resource="EMBL-CDS" id="AAP15640"/>
    </conflict>
    <text>Extended N-terminus.</text>
</comment>
<feature type="signal peptide" evidence="1">
    <location>
        <begin position="1"/>
        <end position="37"/>
    </location>
</feature>
<feature type="chain" id="PRO_0000031993" description="Secretion monitor">
    <location>
        <begin position="38"/>
        <end position="170"/>
    </location>
</feature>